<feature type="chain" id="PRO_0000198185" description="Ribosomal RNA large subunit methyltransferase H">
    <location>
        <begin position="1"/>
        <end position="159"/>
    </location>
</feature>
<feature type="binding site" evidence="1">
    <location>
        <position position="76"/>
    </location>
    <ligand>
        <name>S-adenosyl-L-methionine</name>
        <dbReference type="ChEBI" id="CHEBI:59789"/>
    </ligand>
</feature>
<feature type="binding site" evidence="1">
    <location>
        <position position="108"/>
    </location>
    <ligand>
        <name>S-adenosyl-L-methionine</name>
        <dbReference type="ChEBI" id="CHEBI:59789"/>
    </ligand>
</feature>
<feature type="binding site" evidence="1">
    <location>
        <begin position="127"/>
        <end position="132"/>
    </location>
    <ligand>
        <name>S-adenosyl-L-methionine</name>
        <dbReference type="ChEBI" id="CHEBI:59789"/>
    </ligand>
</feature>
<dbReference type="EC" id="2.1.1.177" evidence="1"/>
<dbReference type="EMBL" id="AP006716">
    <property type="protein sequence ID" value="BAE03332.1"/>
    <property type="molecule type" value="Genomic_DNA"/>
</dbReference>
<dbReference type="RefSeq" id="WP_011274381.1">
    <property type="nucleotide sequence ID" value="NC_007168.1"/>
</dbReference>
<dbReference type="SMR" id="Q4LAJ3"/>
<dbReference type="KEGG" id="sha:SH0023"/>
<dbReference type="eggNOG" id="COG1576">
    <property type="taxonomic scope" value="Bacteria"/>
</dbReference>
<dbReference type="HOGENOM" id="CLU_100552_0_0_9"/>
<dbReference type="OrthoDB" id="9806643at2"/>
<dbReference type="Proteomes" id="UP000000543">
    <property type="component" value="Chromosome"/>
</dbReference>
<dbReference type="GO" id="GO:0005737">
    <property type="term" value="C:cytoplasm"/>
    <property type="evidence" value="ECO:0007669"/>
    <property type="project" value="UniProtKB-SubCell"/>
</dbReference>
<dbReference type="GO" id="GO:0070038">
    <property type="term" value="F:rRNA (pseudouridine-N3-)-methyltransferase activity"/>
    <property type="evidence" value="ECO:0007669"/>
    <property type="project" value="UniProtKB-UniRule"/>
</dbReference>
<dbReference type="CDD" id="cd18081">
    <property type="entry name" value="RlmH-like"/>
    <property type="match status" value="1"/>
</dbReference>
<dbReference type="Gene3D" id="3.40.1280.10">
    <property type="match status" value="1"/>
</dbReference>
<dbReference type="HAMAP" id="MF_00658">
    <property type="entry name" value="23SrRNA_methyltr_H"/>
    <property type="match status" value="1"/>
</dbReference>
<dbReference type="InterPro" id="IPR029028">
    <property type="entry name" value="Alpha/beta_knot_MTases"/>
</dbReference>
<dbReference type="InterPro" id="IPR003742">
    <property type="entry name" value="RlmH-like"/>
</dbReference>
<dbReference type="InterPro" id="IPR029026">
    <property type="entry name" value="tRNA_m1G_MTases_N"/>
</dbReference>
<dbReference type="NCBIfam" id="NF000985">
    <property type="entry name" value="PRK00103.1-3"/>
    <property type="match status" value="1"/>
</dbReference>
<dbReference type="NCBIfam" id="NF000986">
    <property type="entry name" value="PRK00103.1-4"/>
    <property type="match status" value="1"/>
</dbReference>
<dbReference type="NCBIfam" id="TIGR00246">
    <property type="entry name" value="tRNA_RlmH_YbeA"/>
    <property type="match status" value="1"/>
</dbReference>
<dbReference type="PANTHER" id="PTHR33603">
    <property type="entry name" value="METHYLTRANSFERASE"/>
    <property type="match status" value="1"/>
</dbReference>
<dbReference type="PANTHER" id="PTHR33603:SF1">
    <property type="entry name" value="RIBOSOMAL RNA LARGE SUBUNIT METHYLTRANSFERASE H"/>
    <property type="match status" value="1"/>
</dbReference>
<dbReference type="Pfam" id="PF02590">
    <property type="entry name" value="SPOUT_MTase"/>
    <property type="match status" value="1"/>
</dbReference>
<dbReference type="PIRSF" id="PIRSF004505">
    <property type="entry name" value="MT_bac"/>
    <property type="match status" value="1"/>
</dbReference>
<dbReference type="SUPFAM" id="SSF75217">
    <property type="entry name" value="alpha/beta knot"/>
    <property type="match status" value="1"/>
</dbReference>
<keyword id="KW-0963">Cytoplasm</keyword>
<keyword id="KW-0489">Methyltransferase</keyword>
<keyword id="KW-0698">rRNA processing</keyword>
<keyword id="KW-0949">S-adenosyl-L-methionine</keyword>
<keyword id="KW-0808">Transferase</keyword>
<accession>Q4LAJ3</accession>
<sequence length="159" mass="18371">MKITILAVGKLKEKYWKQAISEYEKRLSAYSKIEIIEVPDEKAPENMSDKEIEQVKEKEGQRLLAKIKPQATVITLEIQGKMLSSEGLAEEMQRRMTQGQSDFVFVIGGSNGLHENVLQRSNYALSFSKMTFPHQMMRVVLIEQVYRAFKIMRGEAYHK</sequence>
<reference key="1">
    <citation type="journal article" date="2005" name="J. Bacteriol.">
        <title>Whole-genome sequencing of Staphylococcus haemolyticus uncovers the extreme plasticity of its genome and the evolution of human-colonizing staphylococcal species.</title>
        <authorList>
            <person name="Takeuchi F."/>
            <person name="Watanabe S."/>
            <person name="Baba T."/>
            <person name="Yuzawa H."/>
            <person name="Ito T."/>
            <person name="Morimoto Y."/>
            <person name="Kuroda M."/>
            <person name="Cui L."/>
            <person name="Takahashi M."/>
            <person name="Ankai A."/>
            <person name="Baba S."/>
            <person name="Fukui S."/>
            <person name="Lee J.C."/>
            <person name="Hiramatsu K."/>
        </authorList>
    </citation>
    <scope>NUCLEOTIDE SEQUENCE [LARGE SCALE GENOMIC DNA]</scope>
    <source>
        <strain>JCSC1435</strain>
    </source>
</reference>
<proteinExistence type="inferred from homology"/>
<gene>
    <name evidence="1" type="primary">rlmH</name>
    <name type="ordered locus">SH0023</name>
</gene>
<organism>
    <name type="scientific">Staphylococcus haemolyticus (strain JCSC1435)</name>
    <dbReference type="NCBI Taxonomy" id="279808"/>
    <lineage>
        <taxon>Bacteria</taxon>
        <taxon>Bacillati</taxon>
        <taxon>Bacillota</taxon>
        <taxon>Bacilli</taxon>
        <taxon>Bacillales</taxon>
        <taxon>Staphylococcaceae</taxon>
        <taxon>Staphylococcus</taxon>
    </lineage>
</organism>
<protein>
    <recommendedName>
        <fullName evidence="1">Ribosomal RNA large subunit methyltransferase H</fullName>
        <ecNumber evidence="1">2.1.1.177</ecNumber>
    </recommendedName>
    <alternativeName>
        <fullName evidence="1">23S rRNA (pseudouridine1915-N3)-methyltransferase</fullName>
    </alternativeName>
    <alternativeName>
        <fullName evidence="1">23S rRNA m3Psi1915 methyltransferase</fullName>
    </alternativeName>
    <alternativeName>
        <fullName evidence="1">rRNA (pseudouridine-N3-)-methyltransferase RlmH</fullName>
    </alternativeName>
</protein>
<name>RLMH_STAHJ</name>
<evidence type="ECO:0000255" key="1">
    <source>
        <dbReference type="HAMAP-Rule" id="MF_00658"/>
    </source>
</evidence>
<comment type="function">
    <text evidence="1">Specifically methylates the pseudouridine at position 1915 (m3Psi1915) in 23S rRNA.</text>
</comment>
<comment type="catalytic activity">
    <reaction evidence="1">
        <text>pseudouridine(1915) in 23S rRNA + S-adenosyl-L-methionine = N(3)-methylpseudouridine(1915) in 23S rRNA + S-adenosyl-L-homocysteine + H(+)</text>
        <dbReference type="Rhea" id="RHEA:42752"/>
        <dbReference type="Rhea" id="RHEA-COMP:10221"/>
        <dbReference type="Rhea" id="RHEA-COMP:10222"/>
        <dbReference type="ChEBI" id="CHEBI:15378"/>
        <dbReference type="ChEBI" id="CHEBI:57856"/>
        <dbReference type="ChEBI" id="CHEBI:59789"/>
        <dbReference type="ChEBI" id="CHEBI:65314"/>
        <dbReference type="ChEBI" id="CHEBI:74486"/>
        <dbReference type="EC" id="2.1.1.177"/>
    </reaction>
</comment>
<comment type="subunit">
    <text evidence="1">Homodimer.</text>
</comment>
<comment type="subcellular location">
    <subcellularLocation>
        <location evidence="1">Cytoplasm</location>
    </subcellularLocation>
</comment>
<comment type="similarity">
    <text evidence="1">Belongs to the RNA methyltransferase RlmH family.</text>
</comment>